<keyword id="KW-0963">Cytoplasm</keyword>
<keyword id="KW-0342">GTP-binding</keyword>
<keyword id="KW-0436">Ligase</keyword>
<keyword id="KW-0460">Magnesium</keyword>
<keyword id="KW-0479">Metal-binding</keyword>
<keyword id="KW-0547">Nucleotide-binding</keyword>
<keyword id="KW-0658">Purine biosynthesis</keyword>
<keyword id="KW-1185">Reference proteome</keyword>
<gene>
    <name evidence="1" type="primary">purA</name>
    <name type="ordered locus">NT01CX_0905</name>
</gene>
<sequence>MSAFVVLGAQWGDEGKGKMTDYLAETADVVVRFQGGNNAGHTVVVGDKEYKLHLVPSGILYEDKINVLGNGVVIDPKALFEEINYLEDLGVKVTKEKLKVSDRAQLIMPYHRILDGLKEKARGKNDIGTTGKGIGPAYTDKAERSGIRVCDLMHKDVFEEKLRQNINDKNELIRLYGGEELDFDKIFEEYNAYADRMRPYVTDISVIIYDEMKKNKNVLFEGAQGSLLDIDYGTYPYVTSSSTVAGGVCTGAGVGPTAITGAVGIAKAYTTRVGKGPFPTELLDEMGEKLREKGHEYGVTTGRARRCGWLDLVILKSTARISGLTSFVVTKIDTLAGFDKIKVCTGYEFDGKVIDYFPASLEDLAKCKPVYEEFDGWDDSIADARSYEELPENAKIYLKKIEEFTDTKISIVSVGPKRDQTIVVGEI</sequence>
<reference key="1">
    <citation type="journal article" date="2006" name="Nat. Biotechnol.">
        <title>The genome and transcriptomes of the anti-tumor agent Clostridium novyi-NT.</title>
        <authorList>
            <person name="Bettegowda C."/>
            <person name="Huang X."/>
            <person name="Lin J."/>
            <person name="Cheong I."/>
            <person name="Kohli M."/>
            <person name="Szabo S.A."/>
            <person name="Zhang X."/>
            <person name="Diaz L.A. Jr."/>
            <person name="Velculescu V.E."/>
            <person name="Parmigiani G."/>
            <person name="Kinzler K.W."/>
            <person name="Vogelstein B."/>
            <person name="Zhou S."/>
        </authorList>
    </citation>
    <scope>NUCLEOTIDE SEQUENCE [LARGE SCALE GENOMIC DNA]</scope>
    <source>
        <strain>NT</strain>
    </source>
</reference>
<feature type="chain" id="PRO_1000000806" description="Adenylosuccinate synthetase">
    <location>
        <begin position="1"/>
        <end position="427"/>
    </location>
</feature>
<feature type="active site" description="Proton acceptor" evidence="1">
    <location>
        <position position="13"/>
    </location>
</feature>
<feature type="active site" description="Proton donor" evidence="1">
    <location>
        <position position="41"/>
    </location>
</feature>
<feature type="binding site" evidence="1">
    <location>
        <begin position="12"/>
        <end position="18"/>
    </location>
    <ligand>
        <name>GTP</name>
        <dbReference type="ChEBI" id="CHEBI:37565"/>
    </ligand>
</feature>
<feature type="binding site" description="in other chain" evidence="1">
    <location>
        <begin position="13"/>
        <end position="16"/>
    </location>
    <ligand>
        <name>IMP</name>
        <dbReference type="ChEBI" id="CHEBI:58053"/>
        <note>ligand shared between dimeric partners</note>
    </ligand>
</feature>
<feature type="binding site" evidence="1">
    <location>
        <position position="13"/>
    </location>
    <ligand>
        <name>Mg(2+)</name>
        <dbReference type="ChEBI" id="CHEBI:18420"/>
    </ligand>
</feature>
<feature type="binding site" description="in other chain" evidence="1">
    <location>
        <begin position="38"/>
        <end position="41"/>
    </location>
    <ligand>
        <name>IMP</name>
        <dbReference type="ChEBI" id="CHEBI:58053"/>
        <note>ligand shared between dimeric partners</note>
    </ligand>
</feature>
<feature type="binding site" evidence="1">
    <location>
        <begin position="40"/>
        <end position="42"/>
    </location>
    <ligand>
        <name>GTP</name>
        <dbReference type="ChEBI" id="CHEBI:37565"/>
    </ligand>
</feature>
<feature type="binding site" evidence="1">
    <location>
        <position position="40"/>
    </location>
    <ligand>
        <name>Mg(2+)</name>
        <dbReference type="ChEBI" id="CHEBI:18420"/>
    </ligand>
</feature>
<feature type="binding site" description="in other chain" evidence="1">
    <location>
        <position position="130"/>
    </location>
    <ligand>
        <name>IMP</name>
        <dbReference type="ChEBI" id="CHEBI:58053"/>
        <note>ligand shared between dimeric partners</note>
    </ligand>
</feature>
<feature type="binding site" evidence="1">
    <location>
        <position position="144"/>
    </location>
    <ligand>
        <name>IMP</name>
        <dbReference type="ChEBI" id="CHEBI:58053"/>
        <note>ligand shared between dimeric partners</note>
    </ligand>
</feature>
<feature type="binding site" description="in other chain" evidence="1">
    <location>
        <position position="224"/>
    </location>
    <ligand>
        <name>IMP</name>
        <dbReference type="ChEBI" id="CHEBI:58053"/>
        <note>ligand shared between dimeric partners</note>
    </ligand>
</feature>
<feature type="binding site" description="in other chain" evidence="1">
    <location>
        <position position="239"/>
    </location>
    <ligand>
        <name>IMP</name>
        <dbReference type="ChEBI" id="CHEBI:58053"/>
        <note>ligand shared between dimeric partners</note>
    </ligand>
</feature>
<feature type="binding site" evidence="1">
    <location>
        <begin position="299"/>
        <end position="305"/>
    </location>
    <ligand>
        <name>substrate</name>
    </ligand>
</feature>
<feature type="binding site" description="in other chain" evidence="1">
    <location>
        <position position="303"/>
    </location>
    <ligand>
        <name>IMP</name>
        <dbReference type="ChEBI" id="CHEBI:58053"/>
        <note>ligand shared between dimeric partners</note>
    </ligand>
</feature>
<feature type="binding site" evidence="1">
    <location>
        <position position="305"/>
    </location>
    <ligand>
        <name>GTP</name>
        <dbReference type="ChEBI" id="CHEBI:37565"/>
    </ligand>
</feature>
<feature type="binding site" evidence="1">
    <location>
        <begin position="331"/>
        <end position="333"/>
    </location>
    <ligand>
        <name>GTP</name>
        <dbReference type="ChEBI" id="CHEBI:37565"/>
    </ligand>
</feature>
<feature type="binding site" evidence="1">
    <location>
        <begin position="413"/>
        <end position="415"/>
    </location>
    <ligand>
        <name>GTP</name>
        <dbReference type="ChEBI" id="CHEBI:37565"/>
    </ligand>
</feature>
<dbReference type="EC" id="6.3.4.4" evidence="1"/>
<dbReference type="EMBL" id="CP000382">
    <property type="protein sequence ID" value="ABK61500.1"/>
    <property type="molecule type" value="Genomic_DNA"/>
</dbReference>
<dbReference type="RefSeq" id="WP_011721031.1">
    <property type="nucleotide sequence ID" value="NC_008593.1"/>
</dbReference>
<dbReference type="SMR" id="A0PXA8"/>
<dbReference type="STRING" id="386415.NT01CX_0905"/>
<dbReference type="KEGG" id="cno:NT01CX_0905"/>
<dbReference type="eggNOG" id="COG0104">
    <property type="taxonomic scope" value="Bacteria"/>
</dbReference>
<dbReference type="HOGENOM" id="CLU_029848_0_0_9"/>
<dbReference type="UniPathway" id="UPA00075">
    <property type="reaction ID" value="UER00335"/>
</dbReference>
<dbReference type="Proteomes" id="UP000008220">
    <property type="component" value="Chromosome"/>
</dbReference>
<dbReference type="GO" id="GO:0005737">
    <property type="term" value="C:cytoplasm"/>
    <property type="evidence" value="ECO:0007669"/>
    <property type="project" value="UniProtKB-SubCell"/>
</dbReference>
<dbReference type="GO" id="GO:0004019">
    <property type="term" value="F:adenylosuccinate synthase activity"/>
    <property type="evidence" value="ECO:0007669"/>
    <property type="project" value="UniProtKB-UniRule"/>
</dbReference>
<dbReference type="GO" id="GO:0005525">
    <property type="term" value="F:GTP binding"/>
    <property type="evidence" value="ECO:0007669"/>
    <property type="project" value="UniProtKB-UniRule"/>
</dbReference>
<dbReference type="GO" id="GO:0000287">
    <property type="term" value="F:magnesium ion binding"/>
    <property type="evidence" value="ECO:0007669"/>
    <property type="project" value="UniProtKB-UniRule"/>
</dbReference>
<dbReference type="GO" id="GO:0044208">
    <property type="term" value="P:'de novo' AMP biosynthetic process"/>
    <property type="evidence" value="ECO:0007669"/>
    <property type="project" value="UniProtKB-UniRule"/>
</dbReference>
<dbReference type="GO" id="GO:0046040">
    <property type="term" value="P:IMP metabolic process"/>
    <property type="evidence" value="ECO:0007669"/>
    <property type="project" value="TreeGrafter"/>
</dbReference>
<dbReference type="CDD" id="cd03108">
    <property type="entry name" value="AdSS"/>
    <property type="match status" value="1"/>
</dbReference>
<dbReference type="FunFam" id="1.10.300.10:FF:000001">
    <property type="entry name" value="Adenylosuccinate synthetase"/>
    <property type="match status" value="1"/>
</dbReference>
<dbReference type="FunFam" id="3.90.170.10:FF:000001">
    <property type="entry name" value="Adenylosuccinate synthetase"/>
    <property type="match status" value="1"/>
</dbReference>
<dbReference type="Gene3D" id="3.40.440.10">
    <property type="entry name" value="Adenylosuccinate Synthetase, subunit A, domain 1"/>
    <property type="match status" value="1"/>
</dbReference>
<dbReference type="Gene3D" id="1.10.300.10">
    <property type="entry name" value="Adenylosuccinate Synthetase, subunit A, domain 2"/>
    <property type="match status" value="1"/>
</dbReference>
<dbReference type="Gene3D" id="3.90.170.10">
    <property type="entry name" value="Adenylosuccinate Synthetase, subunit A, domain 3"/>
    <property type="match status" value="1"/>
</dbReference>
<dbReference type="HAMAP" id="MF_00011">
    <property type="entry name" value="Adenylosucc_synth"/>
    <property type="match status" value="1"/>
</dbReference>
<dbReference type="InterPro" id="IPR018220">
    <property type="entry name" value="Adenylosuccin_syn_GTP-bd"/>
</dbReference>
<dbReference type="InterPro" id="IPR033128">
    <property type="entry name" value="Adenylosuccin_syn_Lys_AS"/>
</dbReference>
<dbReference type="InterPro" id="IPR042109">
    <property type="entry name" value="Adenylosuccinate_synth_dom1"/>
</dbReference>
<dbReference type="InterPro" id="IPR042110">
    <property type="entry name" value="Adenylosuccinate_synth_dom2"/>
</dbReference>
<dbReference type="InterPro" id="IPR042111">
    <property type="entry name" value="Adenylosuccinate_synth_dom3"/>
</dbReference>
<dbReference type="InterPro" id="IPR001114">
    <property type="entry name" value="Adenylosuccinate_synthetase"/>
</dbReference>
<dbReference type="InterPro" id="IPR027417">
    <property type="entry name" value="P-loop_NTPase"/>
</dbReference>
<dbReference type="NCBIfam" id="NF002223">
    <property type="entry name" value="PRK01117.1"/>
    <property type="match status" value="1"/>
</dbReference>
<dbReference type="NCBIfam" id="TIGR00184">
    <property type="entry name" value="purA"/>
    <property type="match status" value="1"/>
</dbReference>
<dbReference type="PANTHER" id="PTHR11846">
    <property type="entry name" value="ADENYLOSUCCINATE SYNTHETASE"/>
    <property type="match status" value="1"/>
</dbReference>
<dbReference type="PANTHER" id="PTHR11846:SF0">
    <property type="entry name" value="ADENYLOSUCCINATE SYNTHETASE"/>
    <property type="match status" value="1"/>
</dbReference>
<dbReference type="Pfam" id="PF00709">
    <property type="entry name" value="Adenylsucc_synt"/>
    <property type="match status" value="1"/>
</dbReference>
<dbReference type="SMART" id="SM00788">
    <property type="entry name" value="Adenylsucc_synt"/>
    <property type="match status" value="1"/>
</dbReference>
<dbReference type="SUPFAM" id="SSF52540">
    <property type="entry name" value="P-loop containing nucleoside triphosphate hydrolases"/>
    <property type="match status" value="1"/>
</dbReference>
<dbReference type="PROSITE" id="PS01266">
    <property type="entry name" value="ADENYLOSUCCIN_SYN_1"/>
    <property type="match status" value="1"/>
</dbReference>
<dbReference type="PROSITE" id="PS00513">
    <property type="entry name" value="ADENYLOSUCCIN_SYN_2"/>
    <property type="match status" value="1"/>
</dbReference>
<comment type="function">
    <text evidence="1">Plays an important role in the de novo pathway of purine nucleotide biosynthesis. Catalyzes the first committed step in the biosynthesis of AMP from IMP.</text>
</comment>
<comment type="catalytic activity">
    <reaction evidence="1">
        <text>IMP + L-aspartate + GTP = N(6)-(1,2-dicarboxyethyl)-AMP + GDP + phosphate + 2 H(+)</text>
        <dbReference type="Rhea" id="RHEA:15753"/>
        <dbReference type="ChEBI" id="CHEBI:15378"/>
        <dbReference type="ChEBI" id="CHEBI:29991"/>
        <dbReference type="ChEBI" id="CHEBI:37565"/>
        <dbReference type="ChEBI" id="CHEBI:43474"/>
        <dbReference type="ChEBI" id="CHEBI:57567"/>
        <dbReference type="ChEBI" id="CHEBI:58053"/>
        <dbReference type="ChEBI" id="CHEBI:58189"/>
        <dbReference type="EC" id="6.3.4.4"/>
    </reaction>
</comment>
<comment type="cofactor">
    <cofactor evidence="1">
        <name>Mg(2+)</name>
        <dbReference type="ChEBI" id="CHEBI:18420"/>
    </cofactor>
    <text evidence="1">Binds 1 Mg(2+) ion per subunit.</text>
</comment>
<comment type="pathway">
    <text evidence="1">Purine metabolism; AMP biosynthesis via de novo pathway; AMP from IMP: step 1/2.</text>
</comment>
<comment type="subunit">
    <text evidence="1">Homodimer.</text>
</comment>
<comment type="subcellular location">
    <subcellularLocation>
        <location evidence="1">Cytoplasm</location>
    </subcellularLocation>
</comment>
<comment type="similarity">
    <text evidence="1">Belongs to the adenylosuccinate synthetase family.</text>
</comment>
<protein>
    <recommendedName>
        <fullName evidence="1">Adenylosuccinate synthetase</fullName>
        <shortName evidence="1">AMPSase</shortName>
        <shortName evidence="1">AdSS</shortName>
        <ecNumber evidence="1">6.3.4.4</ecNumber>
    </recommendedName>
    <alternativeName>
        <fullName evidence="1">IMP--aspartate ligase</fullName>
    </alternativeName>
</protein>
<organism>
    <name type="scientific">Clostridium novyi (strain NT)</name>
    <dbReference type="NCBI Taxonomy" id="386415"/>
    <lineage>
        <taxon>Bacteria</taxon>
        <taxon>Bacillati</taxon>
        <taxon>Bacillota</taxon>
        <taxon>Clostridia</taxon>
        <taxon>Eubacteriales</taxon>
        <taxon>Clostridiaceae</taxon>
        <taxon>Clostridium</taxon>
    </lineage>
</organism>
<proteinExistence type="inferred from homology"/>
<evidence type="ECO:0000255" key="1">
    <source>
        <dbReference type="HAMAP-Rule" id="MF_00011"/>
    </source>
</evidence>
<name>PURA_CLONN</name>
<accession>A0PXA8</accession>